<name>RL17_IDILO</name>
<proteinExistence type="inferred from homology"/>
<organism>
    <name type="scientific">Idiomarina loihiensis (strain ATCC BAA-735 / DSM 15497 / L2-TR)</name>
    <dbReference type="NCBI Taxonomy" id="283942"/>
    <lineage>
        <taxon>Bacteria</taxon>
        <taxon>Pseudomonadati</taxon>
        <taxon>Pseudomonadota</taxon>
        <taxon>Gammaproteobacteria</taxon>
        <taxon>Alteromonadales</taxon>
        <taxon>Idiomarinaceae</taxon>
        <taxon>Idiomarina</taxon>
    </lineage>
</organism>
<accession>Q5QXV0</accession>
<keyword id="KW-1185">Reference proteome</keyword>
<keyword id="KW-0687">Ribonucleoprotein</keyword>
<keyword id="KW-0689">Ribosomal protein</keyword>
<comment type="subunit">
    <text evidence="1">Part of the 50S ribosomal subunit. Contacts protein L32.</text>
</comment>
<comment type="similarity">
    <text evidence="1">Belongs to the bacterial ribosomal protein bL17 family.</text>
</comment>
<dbReference type="EMBL" id="AE017340">
    <property type="protein sequence ID" value="AAV82722.1"/>
    <property type="molecule type" value="Genomic_DNA"/>
</dbReference>
<dbReference type="RefSeq" id="WP_011235122.1">
    <property type="nucleotide sequence ID" value="NC_006512.1"/>
</dbReference>
<dbReference type="SMR" id="Q5QXV0"/>
<dbReference type="STRING" id="283942.IL1890"/>
<dbReference type="GeneID" id="41337080"/>
<dbReference type="KEGG" id="ilo:IL1890"/>
<dbReference type="eggNOG" id="COG0203">
    <property type="taxonomic scope" value="Bacteria"/>
</dbReference>
<dbReference type="HOGENOM" id="CLU_074407_2_0_6"/>
<dbReference type="OrthoDB" id="9809073at2"/>
<dbReference type="Proteomes" id="UP000001171">
    <property type="component" value="Chromosome"/>
</dbReference>
<dbReference type="GO" id="GO:0022625">
    <property type="term" value="C:cytosolic large ribosomal subunit"/>
    <property type="evidence" value="ECO:0007669"/>
    <property type="project" value="TreeGrafter"/>
</dbReference>
<dbReference type="GO" id="GO:0003735">
    <property type="term" value="F:structural constituent of ribosome"/>
    <property type="evidence" value="ECO:0007669"/>
    <property type="project" value="InterPro"/>
</dbReference>
<dbReference type="GO" id="GO:0006412">
    <property type="term" value="P:translation"/>
    <property type="evidence" value="ECO:0007669"/>
    <property type="project" value="UniProtKB-UniRule"/>
</dbReference>
<dbReference type="FunFam" id="3.90.1030.10:FF:000001">
    <property type="entry name" value="50S ribosomal protein L17"/>
    <property type="match status" value="1"/>
</dbReference>
<dbReference type="Gene3D" id="3.90.1030.10">
    <property type="entry name" value="Ribosomal protein L17"/>
    <property type="match status" value="1"/>
</dbReference>
<dbReference type="HAMAP" id="MF_01368">
    <property type="entry name" value="Ribosomal_bL17"/>
    <property type="match status" value="1"/>
</dbReference>
<dbReference type="InterPro" id="IPR000456">
    <property type="entry name" value="Ribosomal_bL17"/>
</dbReference>
<dbReference type="InterPro" id="IPR047859">
    <property type="entry name" value="Ribosomal_bL17_CS"/>
</dbReference>
<dbReference type="InterPro" id="IPR036373">
    <property type="entry name" value="Ribosomal_bL17_sf"/>
</dbReference>
<dbReference type="NCBIfam" id="TIGR00059">
    <property type="entry name" value="L17"/>
    <property type="match status" value="1"/>
</dbReference>
<dbReference type="PANTHER" id="PTHR14413:SF16">
    <property type="entry name" value="LARGE RIBOSOMAL SUBUNIT PROTEIN BL17M"/>
    <property type="match status" value="1"/>
</dbReference>
<dbReference type="PANTHER" id="PTHR14413">
    <property type="entry name" value="RIBOSOMAL PROTEIN L17"/>
    <property type="match status" value="1"/>
</dbReference>
<dbReference type="Pfam" id="PF01196">
    <property type="entry name" value="Ribosomal_L17"/>
    <property type="match status" value="1"/>
</dbReference>
<dbReference type="SUPFAM" id="SSF64263">
    <property type="entry name" value="Prokaryotic ribosomal protein L17"/>
    <property type="match status" value="1"/>
</dbReference>
<dbReference type="PROSITE" id="PS01167">
    <property type="entry name" value="RIBOSOMAL_L17"/>
    <property type="match status" value="1"/>
</dbReference>
<reference key="1">
    <citation type="journal article" date="2004" name="Proc. Natl. Acad. Sci. U.S.A.">
        <title>Genome sequence of the deep-sea gamma-proteobacterium Idiomarina loihiensis reveals amino acid fermentation as a source of carbon and energy.</title>
        <authorList>
            <person name="Hou S."/>
            <person name="Saw J.H."/>
            <person name="Lee K.S."/>
            <person name="Freitas T.A."/>
            <person name="Belisle C."/>
            <person name="Kawarabayasi Y."/>
            <person name="Donachie S.P."/>
            <person name="Pikina A."/>
            <person name="Galperin M.Y."/>
            <person name="Koonin E.V."/>
            <person name="Makarova K.S."/>
            <person name="Omelchenko M.V."/>
            <person name="Sorokin A."/>
            <person name="Wolf Y.I."/>
            <person name="Li Q.X."/>
            <person name="Keum Y.S."/>
            <person name="Campbell S."/>
            <person name="Denery J."/>
            <person name="Aizawa S."/>
            <person name="Shibata S."/>
            <person name="Malahoff A."/>
            <person name="Alam M."/>
        </authorList>
    </citation>
    <scope>NUCLEOTIDE SEQUENCE [LARGE SCALE GENOMIC DNA]</scope>
    <source>
        <strain>ATCC BAA-735 / DSM 15497 / L2-TR</strain>
    </source>
</reference>
<protein>
    <recommendedName>
        <fullName evidence="1">Large ribosomal subunit protein bL17</fullName>
    </recommendedName>
    <alternativeName>
        <fullName evidence="2">50S ribosomal protein L17</fullName>
    </alternativeName>
</protein>
<feature type="chain" id="PRO_0000267883" description="Large ribosomal subunit protein bL17">
    <location>
        <begin position="1"/>
        <end position="133"/>
    </location>
</feature>
<sequence>MRHRKSGRQLNRNSSHRQAMFRNMASSLVRHEIIKTTLPKAKELRRVVEPLITMAKQDSVANRRLAFARTRDKEVVGKLFNELGPRYEERPGGYTRIMKCGFRTGDNAPMAYIELVGRPEVEEVEEVAEEAAE</sequence>
<evidence type="ECO:0000255" key="1">
    <source>
        <dbReference type="HAMAP-Rule" id="MF_01368"/>
    </source>
</evidence>
<evidence type="ECO:0000305" key="2"/>
<gene>
    <name evidence="1" type="primary">rplQ</name>
    <name type="ordered locus">IL1890</name>
</gene>